<name>DCUP_CARHZ</name>
<sequence length="350" mass="39153">MNDTFLKACRRENTPYTPVWLMRQAGRYMAEYMEIRNKYSFLEMCKTPELAVEVTLQPVRKLGVDAAILFADILLPLEGMGIGFRFARDEGPVIENPVRTIVDVKKVRVITPEEDVPYVLEAIKILRRELAGKVPLIGFSGAPFTLASYIIEGGGSKNYIQCKRLMWEAPEAWHELLGKIAESTVRYLKAQIAAGAQAVQVFDSWVGTLSPEDYEKYVLPHSKYVFDNLKETGVPVIHFANNAGSMLELVAAAGGDVIGLDWRVSLDRAWQTVGFDRGVQGNLDPVALFAPKEVIRQKVKEILIKAGKRPGHIFNLGHGIHKETPVENAQYLVEVVHELSSLSYEQLLEA</sequence>
<reference key="1">
    <citation type="journal article" date="2005" name="PLoS Genet.">
        <title>Life in hot carbon monoxide: the complete genome sequence of Carboxydothermus hydrogenoformans Z-2901.</title>
        <authorList>
            <person name="Wu M."/>
            <person name="Ren Q."/>
            <person name="Durkin A.S."/>
            <person name="Daugherty S.C."/>
            <person name="Brinkac L.M."/>
            <person name="Dodson R.J."/>
            <person name="Madupu R."/>
            <person name="Sullivan S.A."/>
            <person name="Kolonay J.F."/>
            <person name="Nelson W.C."/>
            <person name="Tallon L.J."/>
            <person name="Jones K.M."/>
            <person name="Ulrich L.E."/>
            <person name="Gonzalez J.M."/>
            <person name="Zhulin I.B."/>
            <person name="Robb F.T."/>
            <person name="Eisen J.A."/>
        </authorList>
    </citation>
    <scope>NUCLEOTIDE SEQUENCE [LARGE SCALE GENOMIC DNA]</scope>
    <source>
        <strain>ATCC BAA-161 / DSM 6008 / Z-2901</strain>
    </source>
</reference>
<organism>
    <name type="scientific">Carboxydothermus hydrogenoformans (strain ATCC BAA-161 / DSM 6008 / Z-2901)</name>
    <dbReference type="NCBI Taxonomy" id="246194"/>
    <lineage>
        <taxon>Bacteria</taxon>
        <taxon>Bacillati</taxon>
        <taxon>Bacillota</taxon>
        <taxon>Clostridia</taxon>
        <taxon>Thermoanaerobacterales</taxon>
        <taxon>Thermoanaerobacteraceae</taxon>
        <taxon>Carboxydothermus</taxon>
    </lineage>
</organism>
<protein>
    <recommendedName>
        <fullName evidence="1">Uroporphyrinogen decarboxylase</fullName>
        <shortName evidence="1">UPD</shortName>
        <shortName evidence="1">URO-D</shortName>
        <ecNumber evidence="1">4.1.1.37</ecNumber>
    </recommendedName>
</protein>
<evidence type="ECO:0000255" key="1">
    <source>
        <dbReference type="HAMAP-Rule" id="MF_00218"/>
    </source>
</evidence>
<feature type="chain" id="PRO_0000325632" description="Uroporphyrinogen decarboxylase">
    <location>
        <begin position="1"/>
        <end position="350"/>
    </location>
</feature>
<feature type="binding site" evidence="1">
    <location>
        <begin position="23"/>
        <end position="27"/>
    </location>
    <ligand>
        <name>substrate</name>
    </ligand>
</feature>
<feature type="binding site" evidence="1">
    <location>
        <position position="72"/>
    </location>
    <ligand>
        <name>substrate</name>
    </ligand>
</feature>
<feature type="binding site" evidence="1">
    <location>
        <position position="149"/>
    </location>
    <ligand>
        <name>substrate</name>
    </ligand>
</feature>
<feature type="binding site" evidence="1">
    <location>
        <position position="204"/>
    </location>
    <ligand>
        <name>substrate</name>
    </ligand>
</feature>
<feature type="binding site" evidence="1">
    <location>
        <position position="318"/>
    </location>
    <ligand>
        <name>substrate</name>
    </ligand>
</feature>
<feature type="site" description="Transition state stabilizer" evidence="1">
    <location>
        <position position="72"/>
    </location>
</feature>
<proteinExistence type="inferred from homology"/>
<dbReference type="EC" id="4.1.1.37" evidence="1"/>
<dbReference type="EMBL" id="CP000141">
    <property type="protein sequence ID" value="ABB14020.1"/>
    <property type="molecule type" value="Genomic_DNA"/>
</dbReference>
<dbReference type="RefSeq" id="WP_011343417.1">
    <property type="nucleotide sequence ID" value="NC_007503.1"/>
</dbReference>
<dbReference type="SMR" id="Q3AEU3"/>
<dbReference type="FunCoup" id="Q3AEU3">
    <property type="interactions" value="434"/>
</dbReference>
<dbReference type="STRING" id="246194.CHY_0483"/>
<dbReference type="KEGG" id="chy:CHY_0483"/>
<dbReference type="eggNOG" id="COG0407">
    <property type="taxonomic scope" value="Bacteria"/>
</dbReference>
<dbReference type="HOGENOM" id="CLU_040933_0_1_9"/>
<dbReference type="InParanoid" id="Q3AEU3"/>
<dbReference type="OrthoDB" id="9813603at2"/>
<dbReference type="UniPathway" id="UPA00251">
    <property type="reaction ID" value="UER00321"/>
</dbReference>
<dbReference type="Proteomes" id="UP000002706">
    <property type="component" value="Chromosome"/>
</dbReference>
<dbReference type="GO" id="GO:0005829">
    <property type="term" value="C:cytosol"/>
    <property type="evidence" value="ECO:0007669"/>
    <property type="project" value="TreeGrafter"/>
</dbReference>
<dbReference type="GO" id="GO:0004853">
    <property type="term" value="F:uroporphyrinogen decarboxylase activity"/>
    <property type="evidence" value="ECO:0007669"/>
    <property type="project" value="UniProtKB-UniRule"/>
</dbReference>
<dbReference type="GO" id="GO:0006782">
    <property type="term" value="P:protoporphyrinogen IX biosynthetic process"/>
    <property type="evidence" value="ECO:0007669"/>
    <property type="project" value="UniProtKB-UniRule"/>
</dbReference>
<dbReference type="CDD" id="cd00717">
    <property type="entry name" value="URO-D"/>
    <property type="match status" value="1"/>
</dbReference>
<dbReference type="FunFam" id="3.20.20.210:FF:000007">
    <property type="entry name" value="Uroporphyrinogen decarboxylase"/>
    <property type="match status" value="1"/>
</dbReference>
<dbReference type="Gene3D" id="3.20.20.210">
    <property type="match status" value="1"/>
</dbReference>
<dbReference type="HAMAP" id="MF_00218">
    <property type="entry name" value="URO_D"/>
    <property type="match status" value="1"/>
</dbReference>
<dbReference type="InterPro" id="IPR038071">
    <property type="entry name" value="UROD/MetE-like_sf"/>
</dbReference>
<dbReference type="InterPro" id="IPR006361">
    <property type="entry name" value="Uroporphyrinogen_deCO2ase_HemE"/>
</dbReference>
<dbReference type="InterPro" id="IPR000257">
    <property type="entry name" value="Uroporphyrinogen_deCOase"/>
</dbReference>
<dbReference type="NCBIfam" id="TIGR01464">
    <property type="entry name" value="hemE"/>
    <property type="match status" value="1"/>
</dbReference>
<dbReference type="PANTHER" id="PTHR21091">
    <property type="entry name" value="METHYLTETRAHYDROFOLATE:HOMOCYSTEINE METHYLTRANSFERASE RELATED"/>
    <property type="match status" value="1"/>
</dbReference>
<dbReference type="PANTHER" id="PTHR21091:SF169">
    <property type="entry name" value="UROPORPHYRINOGEN DECARBOXYLASE"/>
    <property type="match status" value="1"/>
</dbReference>
<dbReference type="Pfam" id="PF01208">
    <property type="entry name" value="URO-D"/>
    <property type="match status" value="1"/>
</dbReference>
<dbReference type="SUPFAM" id="SSF51726">
    <property type="entry name" value="UROD/MetE-like"/>
    <property type="match status" value="1"/>
</dbReference>
<dbReference type="PROSITE" id="PS00906">
    <property type="entry name" value="UROD_1"/>
    <property type="match status" value="1"/>
</dbReference>
<dbReference type="PROSITE" id="PS00907">
    <property type="entry name" value="UROD_2"/>
    <property type="match status" value="1"/>
</dbReference>
<gene>
    <name evidence="1" type="primary">hemE</name>
    <name type="ordered locus">CHY_0483</name>
</gene>
<accession>Q3AEU3</accession>
<comment type="function">
    <text evidence="1">Catalyzes the decarboxylation of four acetate groups of uroporphyrinogen-III to yield coproporphyrinogen-III.</text>
</comment>
<comment type="catalytic activity">
    <reaction evidence="1">
        <text>uroporphyrinogen III + 4 H(+) = coproporphyrinogen III + 4 CO2</text>
        <dbReference type="Rhea" id="RHEA:19865"/>
        <dbReference type="ChEBI" id="CHEBI:15378"/>
        <dbReference type="ChEBI" id="CHEBI:16526"/>
        <dbReference type="ChEBI" id="CHEBI:57308"/>
        <dbReference type="ChEBI" id="CHEBI:57309"/>
        <dbReference type="EC" id="4.1.1.37"/>
    </reaction>
</comment>
<comment type="pathway">
    <text evidence="1">Porphyrin-containing compound metabolism; protoporphyrin-IX biosynthesis; coproporphyrinogen-III from 5-aminolevulinate: step 4/4.</text>
</comment>
<comment type="subunit">
    <text evidence="1">Homodimer.</text>
</comment>
<comment type="subcellular location">
    <subcellularLocation>
        <location evidence="1">Cytoplasm</location>
    </subcellularLocation>
</comment>
<comment type="similarity">
    <text evidence="1">Belongs to the uroporphyrinogen decarboxylase family.</text>
</comment>
<keyword id="KW-0963">Cytoplasm</keyword>
<keyword id="KW-0210">Decarboxylase</keyword>
<keyword id="KW-0456">Lyase</keyword>
<keyword id="KW-0627">Porphyrin biosynthesis</keyword>
<keyword id="KW-1185">Reference proteome</keyword>